<organism>
    <name type="scientific">Ajellomyces dermatitidis (strain ER-3 / ATCC MYA-2586)</name>
    <name type="common">Blastomyces dermatitidis</name>
    <dbReference type="NCBI Taxonomy" id="559297"/>
    <lineage>
        <taxon>Eukaryota</taxon>
        <taxon>Fungi</taxon>
        <taxon>Dikarya</taxon>
        <taxon>Ascomycota</taxon>
        <taxon>Pezizomycotina</taxon>
        <taxon>Eurotiomycetes</taxon>
        <taxon>Eurotiomycetidae</taxon>
        <taxon>Onygenales</taxon>
        <taxon>Ajellomycetaceae</taxon>
        <taxon>Blastomyces</taxon>
    </lineage>
</organism>
<reference key="1">
    <citation type="journal article" date="2015" name="PLoS Genet.">
        <title>The dynamic genome and transcriptome of the human fungal pathogen Blastomyces and close relative Emmonsia.</title>
        <authorList>
            <person name="Munoz J.F."/>
            <person name="Gauthier G.M."/>
            <person name="Desjardins C.A."/>
            <person name="Gallo J.E."/>
            <person name="Holder J."/>
            <person name="Sullivan T.D."/>
            <person name="Marty A.J."/>
            <person name="Carmen J.C."/>
            <person name="Chen Z."/>
            <person name="Ding L."/>
            <person name="Gujja S."/>
            <person name="Magrini V."/>
            <person name="Misas E."/>
            <person name="Mitreva M."/>
            <person name="Priest M."/>
            <person name="Saif S."/>
            <person name="Whiston E.A."/>
            <person name="Young S."/>
            <person name="Zeng Q."/>
            <person name="Goldman W.E."/>
            <person name="Mardis E.R."/>
            <person name="Taylor J.W."/>
            <person name="McEwen J.G."/>
            <person name="Clay O.K."/>
            <person name="Klein B.S."/>
            <person name="Cuomo C.A."/>
        </authorList>
    </citation>
    <scope>NUCLEOTIDE SEQUENCE [LARGE SCALE GENOMIC DNA]</scope>
    <source>
        <strain>ER-3 / ATCC MYA-2586</strain>
    </source>
</reference>
<keyword id="KW-0227">DNA damage</keyword>
<keyword id="KW-0234">DNA repair</keyword>
<keyword id="KW-0235">DNA replication</keyword>
<keyword id="KW-0255">Endonuclease</keyword>
<keyword id="KW-0269">Exonuclease</keyword>
<keyword id="KW-0378">Hydrolase</keyword>
<keyword id="KW-0460">Magnesium</keyword>
<keyword id="KW-0479">Metal-binding</keyword>
<keyword id="KW-0496">Mitochondrion</keyword>
<keyword id="KW-0540">Nuclease</keyword>
<keyword id="KW-0539">Nucleus</keyword>
<keyword id="KW-0597">Phosphoprotein</keyword>
<accession>C5GPA7</accession>
<evidence type="ECO:0000255" key="1">
    <source>
        <dbReference type="HAMAP-Rule" id="MF_03140"/>
    </source>
</evidence>
<evidence type="ECO:0000256" key="2">
    <source>
        <dbReference type="SAM" id="MobiDB-lite"/>
    </source>
</evidence>
<protein>
    <recommendedName>
        <fullName evidence="1">Flap endonuclease 1</fullName>
        <shortName evidence="1">FEN-1</shortName>
        <ecNumber evidence="1">3.1.-.-</ecNumber>
    </recommendedName>
    <alternativeName>
        <fullName evidence="1">Flap structure-specific endonuclease 1</fullName>
    </alternativeName>
</protein>
<sequence>MGIKHLYQVIQENAPDAVKAGEIKNHFGRKVAIDASMSIYSFLVAVRSDGQQLMSETGETTSHLMGMFYRTLRIVENGIKPVYVFDGAPPKLKSGELAKRFMRKSEAAEAHEEAKEVGTAEDVEKFSRRTVRVTREHNEECKKLLKLMGVPYINAPTEAEAQCAVLARAGKVYAAASEDMDTLCFDSPILLRHLTFSEQRKEPILEIHLDRVLEGLDMDRKQFVDLCILLGCDYLDPIPKVGPNTALKLIRDHGSLEKVVEAIQSDPKKKYTIPEDWPYKDARELFFDPDVRKADHPDCNFKWEAPDVEGLVKFLVEEKAFSEDRVRNGAARLQKNLKTAQQSRLEGFFKPIAKTEQEKATLKRKHEEKLELQKKKKKEEAKAKKEAKSKPRGAV</sequence>
<comment type="function">
    <text evidence="1">Structure-specific nuclease with 5'-flap endonuclease and 5'-3' exonuclease activities involved in DNA replication and repair. During DNA replication, cleaves the 5'-overhanging flap structure that is generated by displacement synthesis when DNA polymerase encounters the 5'-end of a downstream Okazaki fragment. It enters the flap from the 5'-end and then tracks to cleave the flap base, leaving a nick for ligation. Also involved in the long patch base excision repair (LP-BER) pathway, by cleaving within the apurinic/apyrimidinic (AP) site-terminated flap. Acts as a genome stabilization factor that prevents flaps from equilibrating into structures that lead to duplications and deletions. Also possesses 5'-3' exonuclease activity on nicked or gapped double-stranded DNA, and exhibits RNase H activity. Also involved in replication and repair of rDNA and in repairing mitochondrial DNA.</text>
</comment>
<comment type="cofactor">
    <cofactor evidence="1">
        <name>Mg(2+)</name>
        <dbReference type="ChEBI" id="CHEBI:18420"/>
    </cofactor>
    <text evidence="1">Binds 2 magnesium ions per subunit. They probably participate in the reaction catalyzed by the enzyme. May bind an additional third magnesium ion after substrate binding.</text>
</comment>
<comment type="subunit">
    <text evidence="1">Interacts with PCNA. Three molecules of FEN1 bind to one PCNA trimer with each molecule binding to one PCNA monomer. PCNA stimulates the nuclease activity without altering cleavage specificity.</text>
</comment>
<comment type="subcellular location">
    <subcellularLocation>
        <location evidence="1">Nucleus</location>
        <location evidence="1">Nucleolus</location>
    </subcellularLocation>
    <subcellularLocation>
        <location evidence="1">Nucleus</location>
        <location evidence="1">Nucleoplasm</location>
    </subcellularLocation>
    <subcellularLocation>
        <location evidence="1">Mitochondrion</location>
    </subcellularLocation>
    <text evidence="1">Resides mostly in the nucleoli and relocalizes to the nucleoplasm upon DNA damage.</text>
</comment>
<comment type="PTM">
    <text evidence="1">Phosphorylated. Phosphorylation upon DNA damage induces relocalization to the nuclear plasma.</text>
</comment>
<comment type="similarity">
    <text evidence="1">Belongs to the XPG/RAD2 endonuclease family. FEN1 subfamily.</text>
</comment>
<name>FEN1_AJEDR</name>
<feature type="chain" id="PRO_0000403557" description="Flap endonuclease 1">
    <location>
        <begin position="1"/>
        <end position="395"/>
    </location>
</feature>
<feature type="region of interest" description="N-domain">
    <location>
        <begin position="1"/>
        <end position="104"/>
    </location>
</feature>
<feature type="region of interest" description="I-domain">
    <location>
        <begin position="122"/>
        <end position="253"/>
    </location>
</feature>
<feature type="region of interest" description="Interaction with PCNA" evidence="1">
    <location>
        <begin position="341"/>
        <end position="349"/>
    </location>
</feature>
<feature type="region of interest" description="Disordered" evidence="2">
    <location>
        <begin position="357"/>
        <end position="395"/>
    </location>
</feature>
<feature type="compositionally biased region" description="Basic and acidic residues" evidence="2">
    <location>
        <begin position="357"/>
        <end position="389"/>
    </location>
</feature>
<feature type="binding site" evidence="1">
    <location>
        <position position="34"/>
    </location>
    <ligand>
        <name>Mg(2+)</name>
        <dbReference type="ChEBI" id="CHEBI:18420"/>
        <label>1</label>
    </ligand>
</feature>
<feature type="binding site" evidence="1">
    <location>
        <position position="47"/>
    </location>
    <ligand>
        <name>DNA</name>
        <dbReference type="ChEBI" id="CHEBI:16991"/>
    </ligand>
</feature>
<feature type="binding site" evidence="1">
    <location>
        <position position="70"/>
    </location>
    <ligand>
        <name>DNA</name>
        <dbReference type="ChEBI" id="CHEBI:16991"/>
    </ligand>
</feature>
<feature type="binding site" evidence="1">
    <location>
        <position position="86"/>
    </location>
    <ligand>
        <name>Mg(2+)</name>
        <dbReference type="ChEBI" id="CHEBI:18420"/>
        <label>1</label>
    </ligand>
</feature>
<feature type="binding site" evidence="1">
    <location>
        <position position="158"/>
    </location>
    <ligand>
        <name>DNA</name>
        <dbReference type="ChEBI" id="CHEBI:16991"/>
    </ligand>
</feature>
<feature type="binding site" evidence="1">
    <location>
        <position position="158"/>
    </location>
    <ligand>
        <name>Mg(2+)</name>
        <dbReference type="ChEBI" id="CHEBI:18420"/>
        <label>1</label>
    </ligand>
</feature>
<feature type="binding site" evidence="1">
    <location>
        <position position="160"/>
    </location>
    <ligand>
        <name>Mg(2+)</name>
        <dbReference type="ChEBI" id="CHEBI:18420"/>
        <label>1</label>
    </ligand>
</feature>
<feature type="binding site" evidence="1">
    <location>
        <position position="179"/>
    </location>
    <ligand>
        <name>Mg(2+)</name>
        <dbReference type="ChEBI" id="CHEBI:18420"/>
        <label>2</label>
    </ligand>
</feature>
<feature type="binding site" evidence="1">
    <location>
        <position position="181"/>
    </location>
    <ligand>
        <name>Mg(2+)</name>
        <dbReference type="ChEBI" id="CHEBI:18420"/>
        <label>2</label>
    </ligand>
</feature>
<feature type="binding site" evidence="1">
    <location>
        <position position="231"/>
    </location>
    <ligand>
        <name>DNA</name>
        <dbReference type="ChEBI" id="CHEBI:16991"/>
    </ligand>
</feature>
<feature type="binding site" evidence="1">
    <location>
        <position position="233"/>
    </location>
    <ligand>
        <name>DNA</name>
        <dbReference type="ChEBI" id="CHEBI:16991"/>
    </ligand>
</feature>
<feature type="binding site" evidence="1">
    <location>
        <position position="233"/>
    </location>
    <ligand>
        <name>Mg(2+)</name>
        <dbReference type="ChEBI" id="CHEBI:18420"/>
        <label>2</label>
    </ligand>
</feature>
<proteinExistence type="inferred from homology"/>
<dbReference type="EC" id="3.1.-.-" evidence="1"/>
<dbReference type="EMBL" id="EQ999978">
    <property type="protein sequence ID" value="EEQ90743.2"/>
    <property type="molecule type" value="Genomic_DNA"/>
</dbReference>
<dbReference type="SMR" id="C5GPA7"/>
<dbReference type="STRING" id="559297.C5GPA7"/>
<dbReference type="VEuPathDB" id="FungiDB:BDCG_05863"/>
<dbReference type="eggNOG" id="KOG2519">
    <property type="taxonomic scope" value="Eukaryota"/>
</dbReference>
<dbReference type="HOGENOM" id="CLU_032444_2_0_1"/>
<dbReference type="OMA" id="MGIPWVQ"/>
<dbReference type="GO" id="GO:0005739">
    <property type="term" value="C:mitochondrion"/>
    <property type="evidence" value="ECO:0007669"/>
    <property type="project" value="UniProtKB-SubCell"/>
</dbReference>
<dbReference type="GO" id="GO:0005730">
    <property type="term" value="C:nucleolus"/>
    <property type="evidence" value="ECO:0007669"/>
    <property type="project" value="UniProtKB-SubCell"/>
</dbReference>
<dbReference type="GO" id="GO:0005654">
    <property type="term" value="C:nucleoplasm"/>
    <property type="evidence" value="ECO:0007669"/>
    <property type="project" value="UniProtKB-SubCell"/>
</dbReference>
<dbReference type="GO" id="GO:0008409">
    <property type="term" value="F:5'-3' exonuclease activity"/>
    <property type="evidence" value="ECO:0007669"/>
    <property type="project" value="UniProtKB-UniRule"/>
</dbReference>
<dbReference type="GO" id="GO:0017108">
    <property type="term" value="F:5'-flap endonuclease activity"/>
    <property type="evidence" value="ECO:0007669"/>
    <property type="project" value="UniProtKB-UniRule"/>
</dbReference>
<dbReference type="GO" id="GO:0003677">
    <property type="term" value="F:DNA binding"/>
    <property type="evidence" value="ECO:0007669"/>
    <property type="project" value="UniProtKB-UniRule"/>
</dbReference>
<dbReference type="GO" id="GO:0000287">
    <property type="term" value="F:magnesium ion binding"/>
    <property type="evidence" value="ECO:0007669"/>
    <property type="project" value="UniProtKB-UniRule"/>
</dbReference>
<dbReference type="GO" id="GO:0006284">
    <property type="term" value="P:base-excision repair"/>
    <property type="evidence" value="ECO:0007669"/>
    <property type="project" value="UniProtKB-UniRule"/>
</dbReference>
<dbReference type="GO" id="GO:0043137">
    <property type="term" value="P:DNA replication, removal of RNA primer"/>
    <property type="evidence" value="ECO:0007669"/>
    <property type="project" value="UniProtKB-UniRule"/>
</dbReference>
<dbReference type="CDD" id="cd09907">
    <property type="entry name" value="H3TH_FEN1-Euk"/>
    <property type="match status" value="1"/>
</dbReference>
<dbReference type="CDD" id="cd09867">
    <property type="entry name" value="PIN_FEN1"/>
    <property type="match status" value="1"/>
</dbReference>
<dbReference type="FunFam" id="1.10.150.20:FF:000009">
    <property type="entry name" value="Flap endonuclease 1"/>
    <property type="match status" value="1"/>
</dbReference>
<dbReference type="FunFam" id="3.40.50.1010:FF:000003">
    <property type="entry name" value="Flap endonuclease 1"/>
    <property type="match status" value="1"/>
</dbReference>
<dbReference type="Gene3D" id="1.10.150.20">
    <property type="entry name" value="5' to 3' exonuclease, C-terminal subdomain"/>
    <property type="match status" value="1"/>
</dbReference>
<dbReference type="Gene3D" id="3.40.50.1010">
    <property type="entry name" value="5'-nuclease"/>
    <property type="match status" value="1"/>
</dbReference>
<dbReference type="HAMAP" id="MF_00614">
    <property type="entry name" value="Fen"/>
    <property type="match status" value="1"/>
</dbReference>
<dbReference type="InterPro" id="IPR036279">
    <property type="entry name" value="5-3_exonuclease_C_sf"/>
</dbReference>
<dbReference type="InterPro" id="IPR023426">
    <property type="entry name" value="Flap_endonuc"/>
</dbReference>
<dbReference type="InterPro" id="IPR008918">
    <property type="entry name" value="HhH2"/>
</dbReference>
<dbReference type="InterPro" id="IPR029060">
    <property type="entry name" value="PIN-like_dom_sf"/>
</dbReference>
<dbReference type="InterPro" id="IPR006086">
    <property type="entry name" value="XPG-I_dom"/>
</dbReference>
<dbReference type="InterPro" id="IPR006084">
    <property type="entry name" value="XPG/Rad2"/>
</dbReference>
<dbReference type="InterPro" id="IPR019974">
    <property type="entry name" value="XPG_CS"/>
</dbReference>
<dbReference type="InterPro" id="IPR006085">
    <property type="entry name" value="XPG_DNA_repair_N"/>
</dbReference>
<dbReference type="PANTHER" id="PTHR11081:SF9">
    <property type="entry name" value="FLAP ENDONUCLEASE 1"/>
    <property type="match status" value="1"/>
</dbReference>
<dbReference type="PANTHER" id="PTHR11081">
    <property type="entry name" value="FLAP ENDONUCLEASE FAMILY MEMBER"/>
    <property type="match status" value="1"/>
</dbReference>
<dbReference type="Pfam" id="PF00867">
    <property type="entry name" value="XPG_I"/>
    <property type="match status" value="1"/>
</dbReference>
<dbReference type="Pfam" id="PF00752">
    <property type="entry name" value="XPG_N"/>
    <property type="match status" value="1"/>
</dbReference>
<dbReference type="PRINTS" id="PR00853">
    <property type="entry name" value="XPGRADSUPER"/>
</dbReference>
<dbReference type="SMART" id="SM00279">
    <property type="entry name" value="HhH2"/>
    <property type="match status" value="1"/>
</dbReference>
<dbReference type="SMART" id="SM00484">
    <property type="entry name" value="XPGI"/>
    <property type="match status" value="1"/>
</dbReference>
<dbReference type="SMART" id="SM00485">
    <property type="entry name" value="XPGN"/>
    <property type="match status" value="1"/>
</dbReference>
<dbReference type="SUPFAM" id="SSF47807">
    <property type="entry name" value="5' to 3' exonuclease, C-terminal subdomain"/>
    <property type="match status" value="1"/>
</dbReference>
<dbReference type="SUPFAM" id="SSF88723">
    <property type="entry name" value="PIN domain-like"/>
    <property type="match status" value="1"/>
</dbReference>
<dbReference type="PROSITE" id="PS00841">
    <property type="entry name" value="XPG_1"/>
    <property type="match status" value="1"/>
</dbReference>
<dbReference type="PROSITE" id="PS00842">
    <property type="entry name" value="XPG_2"/>
    <property type="match status" value="1"/>
</dbReference>
<gene>
    <name evidence="1" type="primary">FEN1</name>
    <name type="ORF">BDCG_05863</name>
</gene>